<evidence type="ECO:0000250" key="1">
    <source>
        <dbReference type="UniProtKB" id="Q92410"/>
    </source>
</evidence>
<evidence type="ECO:0000256" key="2">
    <source>
        <dbReference type="SAM" id="MobiDB-lite"/>
    </source>
</evidence>
<evidence type="ECO:0000269" key="3">
    <source>
    </source>
</evidence>
<evidence type="ECO:0000303" key="4">
    <source>
    </source>
</evidence>
<evidence type="ECO:0000305" key="5"/>
<evidence type="ECO:0000305" key="6">
    <source>
    </source>
</evidence>
<keyword id="KW-0328">Glycosyltransferase</keyword>
<keyword id="KW-0808">Transferase</keyword>
<comment type="function">
    <text evidence="3">Synthase catalytic subunit of the trehalose synthase complex that catalyzes the production of trehalose from glucose-6-phosphate and UDP-alpha-D-glucose in a two step process.</text>
</comment>
<comment type="catalytic activity">
    <reaction evidence="6">
        <text>D-glucose 6-phosphate + UDP-alpha-D-glucose = alpha,alpha-trehalose 6-phosphate + UDP + H(+)</text>
        <dbReference type="Rhea" id="RHEA:18889"/>
        <dbReference type="ChEBI" id="CHEBI:15378"/>
        <dbReference type="ChEBI" id="CHEBI:58223"/>
        <dbReference type="ChEBI" id="CHEBI:58429"/>
        <dbReference type="ChEBI" id="CHEBI:58885"/>
        <dbReference type="ChEBI" id="CHEBI:61548"/>
        <dbReference type="EC" id="2.4.1.15"/>
    </reaction>
</comment>
<comment type="pathway">
    <text evidence="5">Carbohydrate biosynthesis.</text>
</comment>
<comment type="disruption phenotype">
    <text evidence="3">Decreases cellular trehalose level during hyphal growth (PubMed:9006911). Sensitive to therml stress (PubMed:9006911).</text>
</comment>
<comment type="similarity">
    <text evidence="5">Belongs to the glycosyltransferase 20 family.</text>
</comment>
<dbReference type="EC" id="2.4.1.15" evidence="6"/>
<dbReference type="EMBL" id="U07184">
    <property type="protein sequence ID" value="AAA21861.1"/>
    <property type="molecule type" value="Unassigned_DNA"/>
</dbReference>
<dbReference type="SMR" id="Q00075"/>
<dbReference type="CAZy" id="GT20">
    <property type="family name" value="Glycosyltransferase Family 20"/>
</dbReference>
<dbReference type="PaxDb" id="5061-CADANGAP00007233"/>
<dbReference type="VEuPathDB" id="FungiDB:An08g10510"/>
<dbReference type="VEuPathDB" id="FungiDB:ASPNIDRAFT2_1180293"/>
<dbReference type="VEuPathDB" id="FungiDB:ATCC64974_98360"/>
<dbReference type="VEuPathDB" id="FungiDB:M747DRAFT_315913"/>
<dbReference type="eggNOG" id="KOG1050">
    <property type="taxonomic scope" value="Eukaryota"/>
</dbReference>
<dbReference type="GO" id="GO:0005946">
    <property type="term" value="C:alpha,alpha-trehalose-phosphate synthase complex (UDP-forming)"/>
    <property type="evidence" value="ECO:0007669"/>
    <property type="project" value="TreeGrafter"/>
</dbReference>
<dbReference type="GO" id="GO:0005829">
    <property type="term" value="C:cytosol"/>
    <property type="evidence" value="ECO:0007669"/>
    <property type="project" value="TreeGrafter"/>
</dbReference>
<dbReference type="GO" id="GO:0003825">
    <property type="term" value="F:alpha,alpha-trehalose-phosphate synthase (UDP-forming) activity"/>
    <property type="evidence" value="ECO:0007669"/>
    <property type="project" value="UniProtKB-EC"/>
</dbReference>
<dbReference type="GO" id="GO:0102986">
    <property type="term" value="F:trehalose synthase activity"/>
    <property type="evidence" value="ECO:0000315"/>
    <property type="project" value="UniProtKB"/>
</dbReference>
<dbReference type="GO" id="GO:0004805">
    <property type="term" value="F:trehalose-phosphatase activity"/>
    <property type="evidence" value="ECO:0007669"/>
    <property type="project" value="TreeGrafter"/>
</dbReference>
<dbReference type="GO" id="GO:0034605">
    <property type="term" value="P:cellular response to heat"/>
    <property type="evidence" value="ECO:0007669"/>
    <property type="project" value="TreeGrafter"/>
</dbReference>
<dbReference type="GO" id="GO:0005992">
    <property type="term" value="P:trehalose biosynthetic process"/>
    <property type="evidence" value="ECO:0000315"/>
    <property type="project" value="UniProtKB"/>
</dbReference>
<dbReference type="CDD" id="cd03788">
    <property type="entry name" value="GT20_TPS"/>
    <property type="match status" value="1"/>
</dbReference>
<dbReference type="FunFam" id="3.40.50.2000:FF:000007">
    <property type="entry name" value="Trehalose-6-phosphate synthase"/>
    <property type="match status" value="1"/>
</dbReference>
<dbReference type="FunFam" id="3.40.50.2000:FF:000035">
    <property type="entry name" value="Trehalose-6-phosphate synthase"/>
    <property type="match status" value="1"/>
</dbReference>
<dbReference type="Gene3D" id="3.40.50.2000">
    <property type="entry name" value="Glycogen Phosphorylase B"/>
    <property type="match status" value="2"/>
</dbReference>
<dbReference type="InterPro" id="IPR001830">
    <property type="entry name" value="Glyco_trans_20"/>
</dbReference>
<dbReference type="InterPro" id="IPR012766">
    <property type="entry name" value="Trehalose_OtsA"/>
</dbReference>
<dbReference type="NCBIfam" id="TIGR02400">
    <property type="entry name" value="trehalose_OtsA"/>
    <property type="match status" value="1"/>
</dbReference>
<dbReference type="PANTHER" id="PTHR10788:SF106">
    <property type="entry name" value="BCDNA.GH08860"/>
    <property type="match status" value="1"/>
</dbReference>
<dbReference type="PANTHER" id="PTHR10788">
    <property type="entry name" value="TREHALOSE-6-PHOSPHATE SYNTHASE"/>
    <property type="match status" value="1"/>
</dbReference>
<dbReference type="Pfam" id="PF00982">
    <property type="entry name" value="Glyco_transf_20"/>
    <property type="match status" value="1"/>
</dbReference>
<dbReference type="SUPFAM" id="SSF53756">
    <property type="entry name" value="UDP-Glycosyltransferase/glycogen phosphorylase"/>
    <property type="match status" value="1"/>
</dbReference>
<protein>
    <recommendedName>
        <fullName>Alpha,alpha-trehalose-phosphate synthase [UDP-forming] 1</fullName>
        <ecNumber evidence="6">2.4.1.15</ecNumber>
    </recommendedName>
    <alternativeName>
        <fullName>Trehalose-6-phosphate synthase</fullName>
    </alternativeName>
    <alternativeName>
        <fullName>UDP-glucose-glucosephosphate glucosyltransferase</fullName>
    </alternativeName>
</protein>
<name>TPS1A_ASPNG</name>
<accession>Q00075</accession>
<organism>
    <name type="scientific">Aspergillus niger</name>
    <dbReference type="NCBI Taxonomy" id="5061"/>
    <lineage>
        <taxon>Eukaryota</taxon>
        <taxon>Fungi</taxon>
        <taxon>Dikarya</taxon>
        <taxon>Ascomycota</taxon>
        <taxon>Pezizomycotina</taxon>
        <taxon>Eurotiomycetes</taxon>
        <taxon>Eurotiomycetidae</taxon>
        <taxon>Eurotiales</taxon>
        <taxon>Aspergillaceae</taxon>
        <taxon>Aspergillus</taxon>
        <taxon>Aspergillus subgen. Circumdati</taxon>
    </lineage>
</organism>
<feature type="chain" id="PRO_0000122494" description="Alpha,alpha-trehalose-phosphate synthase [UDP-forming] 1">
    <location>
        <begin position="1"/>
        <end position="517"/>
    </location>
</feature>
<feature type="region of interest" description="Disordered" evidence="2">
    <location>
        <begin position="486"/>
        <end position="517"/>
    </location>
</feature>
<feature type="compositionally biased region" description="Polar residues" evidence="2">
    <location>
        <begin position="493"/>
        <end position="517"/>
    </location>
</feature>
<feature type="binding site" evidence="1">
    <location>
        <position position="98"/>
    </location>
    <ligand>
        <name>D-glucose 6-phosphate</name>
        <dbReference type="ChEBI" id="CHEBI:61548"/>
    </ligand>
</feature>
<feature type="binding site" evidence="1">
    <location>
        <position position="152"/>
    </location>
    <ligand>
        <name>D-glucose 6-phosphate</name>
        <dbReference type="ChEBI" id="CHEBI:61548"/>
    </ligand>
</feature>
<feature type="binding site" evidence="1">
    <location>
        <position position="288"/>
    </location>
    <ligand>
        <name>UDP</name>
        <dbReference type="ChEBI" id="CHEBI:58223"/>
    </ligand>
</feature>
<feature type="binding site" evidence="1">
    <location>
        <position position="288"/>
    </location>
    <ligand>
        <name>UDP-alpha-D-glucose</name>
        <dbReference type="ChEBI" id="CHEBI:58885"/>
    </ligand>
</feature>
<feature type="binding site" evidence="1">
    <location>
        <position position="293"/>
    </location>
    <ligand>
        <name>UDP</name>
        <dbReference type="ChEBI" id="CHEBI:58223"/>
    </ligand>
</feature>
<feature type="binding site" evidence="1">
    <location>
        <position position="293"/>
    </location>
    <ligand>
        <name>UDP-alpha-D-glucose</name>
        <dbReference type="ChEBI" id="CHEBI:58885"/>
    </ligand>
</feature>
<feature type="binding site" evidence="1">
    <location>
        <position position="326"/>
    </location>
    <ligand>
        <name>D-glucose 6-phosphate</name>
        <dbReference type="ChEBI" id="CHEBI:61548"/>
    </ligand>
</feature>
<feature type="binding site" evidence="1">
    <location>
        <begin position="387"/>
        <end position="395"/>
    </location>
    <ligand>
        <name>UDP-alpha-D-glucose</name>
        <dbReference type="ChEBI" id="CHEBI:58885"/>
    </ligand>
</feature>
<feature type="binding site" evidence="1">
    <location>
        <begin position="391"/>
        <end position="395"/>
    </location>
    <ligand>
        <name>UDP</name>
        <dbReference type="ChEBI" id="CHEBI:58223"/>
    </ligand>
</feature>
<reference key="1">
    <citation type="journal article" date="1997" name="J. Biol. Chem.">
        <title>The filamentous fungus Aspergillus niger contains two 'differentially regulated' trehalose-6-phosphate synthase-encoding genes, tpsA and tpsB.</title>
        <authorList>
            <person name="Wolschek M.F."/>
            <person name="Kubicek C.P."/>
        </authorList>
    </citation>
    <scope>NUCLEOTIDE SEQUENCE [GENOMIC DNA]</scope>
    <scope>FUNCTION</scope>
    <scope>CATALYTIC ACTIVITY</scope>
    <scope>DISRUPTION PHENOTYPE</scope>
    <source>
        <strain>ATCC 11414 / NRRL 2270 / VTT D-77050 / A-1-233</strain>
    </source>
</reference>
<sequence length="517" mass="58376">MPSLENPTFQNEARLLLVSNRLPITIKRSDDGRYDFSMSSGGLVSGLSGLSKSTTFQWYGWPGLEVPEEEIPVVKERLKQEYNAVPVFIDDELADRHYNGFSNSILWPLFHYHPGEITFDESAWEAYKEANRLFAKAVAKEVQDGDLIWVHDYHLMLLPEMLREEIGDSKENVKIGFFLHTPFPSSEIYRILPVRNELLLGVLHCDLIGFHTYDYTRHFLSACSRLLGLTTTPNGIEFQGKIIACGAFPIGIDPEKFEEGLKKEKVQKRIAMLEQKFQGVKLMVGVDRLDYIKGVPQKLHALEVFLSDHPEWVGKVVLVQVAVPSRQDVEEYQNLRAVVNELVGRINGKFGTVEFMPIHFLHKSVNFDELIALYAVSDACIVSSTRDGMNLVAYEYIATQKKRHGVLVLSEFAGAAQSLNGSIIINPWNTEELAGAYQEAVTMSDEQRALNFSKLDKYVNKYTSAFWGQSFVTELTRISEHSAEKFHAKKASFSDNNSENGEPSNGVETPAQEQVAQ</sequence>
<gene>
    <name evidence="4" type="primary">tpsA</name>
    <name type="synonym">tps1</name>
</gene>
<proteinExistence type="evidence at protein level"/>